<keyword id="KW-0071">Autoinducer synthesis</keyword>
<keyword id="KW-0408">Iron</keyword>
<keyword id="KW-0456">Lyase</keyword>
<keyword id="KW-0479">Metal-binding</keyword>
<keyword id="KW-0673">Quorum sensing</keyword>
<feature type="chain" id="PRO_1000093306" description="S-ribosylhomocysteine lyase">
    <location>
        <begin position="1"/>
        <end position="171"/>
    </location>
</feature>
<feature type="binding site" evidence="1">
    <location>
        <position position="54"/>
    </location>
    <ligand>
        <name>Fe cation</name>
        <dbReference type="ChEBI" id="CHEBI:24875"/>
    </ligand>
</feature>
<feature type="binding site" evidence="1">
    <location>
        <position position="58"/>
    </location>
    <ligand>
        <name>Fe cation</name>
        <dbReference type="ChEBI" id="CHEBI:24875"/>
    </ligand>
</feature>
<feature type="binding site" evidence="1">
    <location>
        <position position="128"/>
    </location>
    <ligand>
        <name>Fe cation</name>
        <dbReference type="ChEBI" id="CHEBI:24875"/>
    </ligand>
</feature>
<name>LUXS_ECOSE</name>
<dbReference type="EC" id="4.4.1.21" evidence="1"/>
<dbReference type="EMBL" id="AP009240">
    <property type="protein sequence ID" value="BAG78464.1"/>
    <property type="molecule type" value="Genomic_DNA"/>
</dbReference>
<dbReference type="RefSeq" id="WP_001130210.1">
    <property type="nucleotide sequence ID" value="NC_011415.1"/>
</dbReference>
<dbReference type="SMR" id="B6I678"/>
<dbReference type="KEGG" id="ecy:ECSE_2940"/>
<dbReference type="HOGENOM" id="CLU_107531_2_0_6"/>
<dbReference type="Proteomes" id="UP000008199">
    <property type="component" value="Chromosome"/>
</dbReference>
<dbReference type="GO" id="GO:0005506">
    <property type="term" value="F:iron ion binding"/>
    <property type="evidence" value="ECO:0007669"/>
    <property type="project" value="InterPro"/>
</dbReference>
<dbReference type="GO" id="GO:0043768">
    <property type="term" value="F:S-ribosylhomocysteine lyase activity"/>
    <property type="evidence" value="ECO:0007669"/>
    <property type="project" value="UniProtKB-UniRule"/>
</dbReference>
<dbReference type="GO" id="GO:0009372">
    <property type="term" value="P:quorum sensing"/>
    <property type="evidence" value="ECO:0007669"/>
    <property type="project" value="UniProtKB-UniRule"/>
</dbReference>
<dbReference type="FunFam" id="3.30.1360.80:FF:000001">
    <property type="entry name" value="S-ribosylhomocysteine lyase"/>
    <property type="match status" value="1"/>
</dbReference>
<dbReference type="Gene3D" id="3.30.1360.80">
    <property type="entry name" value="S-ribosylhomocysteinase (LuxS)"/>
    <property type="match status" value="1"/>
</dbReference>
<dbReference type="HAMAP" id="MF_00091">
    <property type="entry name" value="LuxS"/>
    <property type="match status" value="1"/>
</dbReference>
<dbReference type="InterPro" id="IPR037005">
    <property type="entry name" value="LuxS_sf"/>
</dbReference>
<dbReference type="InterPro" id="IPR011249">
    <property type="entry name" value="Metalloenz_LuxS/M16"/>
</dbReference>
<dbReference type="InterPro" id="IPR003815">
    <property type="entry name" value="S-ribosylhomocysteinase"/>
</dbReference>
<dbReference type="NCBIfam" id="NF002602">
    <property type="entry name" value="PRK02260.1-2"/>
    <property type="match status" value="1"/>
</dbReference>
<dbReference type="PANTHER" id="PTHR35799">
    <property type="entry name" value="S-RIBOSYLHOMOCYSTEINE LYASE"/>
    <property type="match status" value="1"/>
</dbReference>
<dbReference type="PANTHER" id="PTHR35799:SF1">
    <property type="entry name" value="S-RIBOSYLHOMOCYSTEINE LYASE"/>
    <property type="match status" value="1"/>
</dbReference>
<dbReference type="Pfam" id="PF02664">
    <property type="entry name" value="LuxS"/>
    <property type="match status" value="1"/>
</dbReference>
<dbReference type="PIRSF" id="PIRSF006160">
    <property type="entry name" value="AI2"/>
    <property type="match status" value="1"/>
</dbReference>
<dbReference type="PRINTS" id="PR01487">
    <property type="entry name" value="LUXSPROTEIN"/>
</dbReference>
<dbReference type="SUPFAM" id="SSF63411">
    <property type="entry name" value="LuxS/MPP-like metallohydrolase"/>
    <property type="match status" value="1"/>
</dbReference>
<proteinExistence type="inferred from homology"/>
<gene>
    <name evidence="1" type="primary">luxS</name>
    <name type="ordered locus">ECSE_2940</name>
</gene>
<accession>B6I678</accession>
<protein>
    <recommendedName>
        <fullName evidence="1">S-ribosylhomocysteine lyase</fullName>
        <ecNumber evidence="1">4.4.1.21</ecNumber>
    </recommendedName>
    <alternativeName>
        <fullName evidence="1">AI-2 synthesis protein</fullName>
    </alternativeName>
    <alternativeName>
        <fullName evidence="1">Autoinducer-2 production protein LuxS</fullName>
    </alternativeName>
</protein>
<evidence type="ECO:0000255" key="1">
    <source>
        <dbReference type="HAMAP-Rule" id="MF_00091"/>
    </source>
</evidence>
<comment type="function">
    <text evidence="1">Involved in the synthesis of autoinducer 2 (AI-2) which is secreted by bacteria and is used to communicate both the cell density and the metabolic potential of the environment. The regulation of gene expression in response to changes in cell density is called quorum sensing. Catalyzes the transformation of S-ribosylhomocysteine (RHC) to homocysteine (HC) and 4,5-dihydroxy-2,3-pentadione (DPD).</text>
</comment>
<comment type="catalytic activity">
    <reaction evidence="1">
        <text>S-(5-deoxy-D-ribos-5-yl)-L-homocysteine = (S)-4,5-dihydroxypentane-2,3-dione + L-homocysteine</text>
        <dbReference type="Rhea" id="RHEA:17753"/>
        <dbReference type="ChEBI" id="CHEBI:29484"/>
        <dbReference type="ChEBI" id="CHEBI:58195"/>
        <dbReference type="ChEBI" id="CHEBI:58199"/>
        <dbReference type="EC" id="4.4.1.21"/>
    </reaction>
</comment>
<comment type="cofactor">
    <cofactor evidence="1">
        <name>Fe cation</name>
        <dbReference type="ChEBI" id="CHEBI:24875"/>
    </cofactor>
    <text evidence="1">Binds 1 Fe cation per subunit.</text>
</comment>
<comment type="subunit">
    <text evidence="1">Homodimer.</text>
</comment>
<comment type="similarity">
    <text evidence="1">Belongs to the LuxS family.</text>
</comment>
<reference key="1">
    <citation type="journal article" date="2008" name="DNA Res.">
        <title>Complete genome sequence and comparative analysis of the wild-type commensal Escherichia coli strain SE11 isolated from a healthy adult.</title>
        <authorList>
            <person name="Oshima K."/>
            <person name="Toh H."/>
            <person name="Ogura Y."/>
            <person name="Sasamoto H."/>
            <person name="Morita H."/>
            <person name="Park S.-H."/>
            <person name="Ooka T."/>
            <person name="Iyoda S."/>
            <person name="Taylor T.D."/>
            <person name="Hayashi T."/>
            <person name="Itoh K."/>
            <person name="Hattori M."/>
        </authorList>
    </citation>
    <scope>NUCLEOTIDE SEQUENCE [LARGE SCALE GENOMIC DNA]</scope>
    <source>
        <strain>SE11</strain>
    </source>
</reference>
<sequence>MPLLDSFTVDHTRMEAPAVRVAKTMNTPHGDAITVFDLRFCVPNKEVMPERGIHTLEHLFAGFMRNHLNGNGVEIIDISPMGCRTGFYMSLIGTPDEQRVADAWKAAMEDVLKVQDQNQIPELNVYQCGTYQMHSLQEAQDIARSILERDVRINSNEELALPEEKLQELHI</sequence>
<organism>
    <name type="scientific">Escherichia coli (strain SE11)</name>
    <dbReference type="NCBI Taxonomy" id="409438"/>
    <lineage>
        <taxon>Bacteria</taxon>
        <taxon>Pseudomonadati</taxon>
        <taxon>Pseudomonadota</taxon>
        <taxon>Gammaproteobacteria</taxon>
        <taxon>Enterobacterales</taxon>
        <taxon>Enterobacteriaceae</taxon>
        <taxon>Escherichia</taxon>
    </lineage>
</organism>